<gene>
    <name evidence="1" type="primary">rsmA</name>
    <name evidence="1" type="synonym">ksgA</name>
    <name type="ordered locus">PSPTO_0551</name>
</gene>
<evidence type="ECO:0000255" key="1">
    <source>
        <dbReference type="HAMAP-Rule" id="MF_00607"/>
    </source>
</evidence>
<proteinExistence type="inferred from homology"/>
<comment type="function">
    <text evidence="1">Specifically dimethylates two adjacent adenosines (A1518 and A1519) in the loop of a conserved hairpin near the 3'-end of 16S rRNA in the 30S particle. May play a critical role in biogenesis of 30S subunits.</text>
</comment>
<comment type="catalytic activity">
    <reaction evidence="1">
        <text>adenosine(1518)/adenosine(1519) in 16S rRNA + 4 S-adenosyl-L-methionine = N(6)-dimethyladenosine(1518)/N(6)-dimethyladenosine(1519) in 16S rRNA + 4 S-adenosyl-L-homocysteine + 4 H(+)</text>
        <dbReference type="Rhea" id="RHEA:19609"/>
        <dbReference type="Rhea" id="RHEA-COMP:10232"/>
        <dbReference type="Rhea" id="RHEA-COMP:10233"/>
        <dbReference type="ChEBI" id="CHEBI:15378"/>
        <dbReference type="ChEBI" id="CHEBI:57856"/>
        <dbReference type="ChEBI" id="CHEBI:59789"/>
        <dbReference type="ChEBI" id="CHEBI:74411"/>
        <dbReference type="ChEBI" id="CHEBI:74493"/>
        <dbReference type="EC" id="2.1.1.182"/>
    </reaction>
</comment>
<comment type="subcellular location">
    <subcellularLocation>
        <location evidence="1">Cytoplasm</location>
    </subcellularLocation>
</comment>
<comment type="similarity">
    <text evidence="1">Belongs to the class I-like SAM-binding methyltransferase superfamily. rRNA adenine N(6)-methyltransferase family. RsmA subfamily.</text>
</comment>
<keyword id="KW-0963">Cytoplasm</keyword>
<keyword id="KW-0489">Methyltransferase</keyword>
<keyword id="KW-1185">Reference proteome</keyword>
<keyword id="KW-0694">RNA-binding</keyword>
<keyword id="KW-0698">rRNA processing</keyword>
<keyword id="KW-0949">S-adenosyl-L-methionine</keyword>
<keyword id="KW-0808">Transferase</keyword>
<dbReference type="EC" id="2.1.1.182" evidence="1"/>
<dbReference type="EMBL" id="AE016853">
    <property type="protein sequence ID" value="AAO54093.1"/>
    <property type="molecule type" value="Genomic_DNA"/>
</dbReference>
<dbReference type="RefSeq" id="NP_790398.1">
    <property type="nucleotide sequence ID" value="NC_004578.1"/>
</dbReference>
<dbReference type="RefSeq" id="WP_005768067.1">
    <property type="nucleotide sequence ID" value="NC_004578.1"/>
</dbReference>
<dbReference type="SMR" id="Q88A46"/>
<dbReference type="STRING" id="223283.PSPTO_0551"/>
<dbReference type="GeneID" id="1182161"/>
<dbReference type="KEGG" id="pst:PSPTO_0551"/>
<dbReference type="PATRIC" id="fig|223283.9.peg.561"/>
<dbReference type="eggNOG" id="COG0030">
    <property type="taxonomic scope" value="Bacteria"/>
</dbReference>
<dbReference type="HOGENOM" id="CLU_041220_0_1_6"/>
<dbReference type="OrthoDB" id="9814755at2"/>
<dbReference type="PhylomeDB" id="Q88A46"/>
<dbReference type="Proteomes" id="UP000002515">
    <property type="component" value="Chromosome"/>
</dbReference>
<dbReference type="GO" id="GO:0005829">
    <property type="term" value="C:cytosol"/>
    <property type="evidence" value="ECO:0007669"/>
    <property type="project" value="TreeGrafter"/>
</dbReference>
<dbReference type="GO" id="GO:0052908">
    <property type="term" value="F:16S rRNA (adenine(1518)-N(6)/adenine(1519)-N(6))-dimethyltransferase activity"/>
    <property type="evidence" value="ECO:0007669"/>
    <property type="project" value="UniProtKB-EC"/>
</dbReference>
<dbReference type="GO" id="GO:0003723">
    <property type="term" value="F:RNA binding"/>
    <property type="evidence" value="ECO:0007669"/>
    <property type="project" value="UniProtKB-KW"/>
</dbReference>
<dbReference type="FunFam" id="1.10.8.100:FF:000001">
    <property type="entry name" value="Ribosomal RNA small subunit methyltransferase A"/>
    <property type="match status" value="1"/>
</dbReference>
<dbReference type="Gene3D" id="1.10.8.100">
    <property type="entry name" value="Ribosomal RNA adenine dimethylase-like, domain 2"/>
    <property type="match status" value="1"/>
</dbReference>
<dbReference type="Gene3D" id="3.40.50.150">
    <property type="entry name" value="Vaccinia Virus protein VP39"/>
    <property type="match status" value="1"/>
</dbReference>
<dbReference type="HAMAP" id="MF_00607">
    <property type="entry name" value="16SrRNA_methyltr_A"/>
    <property type="match status" value="1"/>
</dbReference>
<dbReference type="InterPro" id="IPR001737">
    <property type="entry name" value="KsgA/Erm"/>
</dbReference>
<dbReference type="InterPro" id="IPR023165">
    <property type="entry name" value="rRNA_Ade_diMease-like_C"/>
</dbReference>
<dbReference type="InterPro" id="IPR020596">
    <property type="entry name" value="rRNA_Ade_Mease_Trfase_CS"/>
</dbReference>
<dbReference type="InterPro" id="IPR020598">
    <property type="entry name" value="rRNA_Ade_methylase_Trfase_N"/>
</dbReference>
<dbReference type="InterPro" id="IPR011530">
    <property type="entry name" value="rRNA_adenine_dimethylase"/>
</dbReference>
<dbReference type="InterPro" id="IPR029063">
    <property type="entry name" value="SAM-dependent_MTases_sf"/>
</dbReference>
<dbReference type="NCBIfam" id="TIGR00755">
    <property type="entry name" value="ksgA"/>
    <property type="match status" value="1"/>
</dbReference>
<dbReference type="PANTHER" id="PTHR11727">
    <property type="entry name" value="DIMETHYLADENOSINE TRANSFERASE"/>
    <property type="match status" value="1"/>
</dbReference>
<dbReference type="PANTHER" id="PTHR11727:SF7">
    <property type="entry name" value="DIMETHYLADENOSINE TRANSFERASE-RELATED"/>
    <property type="match status" value="1"/>
</dbReference>
<dbReference type="Pfam" id="PF00398">
    <property type="entry name" value="RrnaAD"/>
    <property type="match status" value="1"/>
</dbReference>
<dbReference type="SMART" id="SM00650">
    <property type="entry name" value="rADc"/>
    <property type="match status" value="1"/>
</dbReference>
<dbReference type="SUPFAM" id="SSF53335">
    <property type="entry name" value="S-adenosyl-L-methionine-dependent methyltransferases"/>
    <property type="match status" value="1"/>
</dbReference>
<dbReference type="PROSITE" id="PS01131">
    <property type="entry name" value="RRNA_A_DIMETH"/>
    <property type="match status" value="1"/>
</dbReference>
<dbReference type="PROSITE" id="PS51689">
    <property type="entry name" value="SAM_RNA_A_N6_MT"/>
    <property type="match status" value="1"/>
</dbReference>
<sequence>MTEQFQHRARKRFGQNFLHDAGVIDKILRAIRAKPEDRLLEIGPGQGALTEGLLNSGAQLDVVELDKDLIPILNSQFASQPNFNLHQGDALKFDFNTLGAEPRSLRVVGNLPYNISTPLIFHLLQNASLIRDMHFMLQKEVVERMAAGPGGGDWGRLSIMVQYHCRVEHLFNVGPGAFNPPPKVDSAIVRLVPYETLPHPAKDHRVLERVVREAFNQRRKTLRNTLKLLLSSDEITASGVDGSLRPEQLDLAAFVRLADTLSEKVLTE</sequence>
<name>RSMA_PSESM</name>
<reference key="1">
    <citation type="journal article" date="2003" name="Proc. Natl. Acad. Sci. U.S.A.">
        <title>The complete genome sequence of the Arabidopsis and tomato pathogen Pseudomonas syringae pv. tomato DC3000.</title>
        <authorList>
            <person name="Buell C.R."/>
            <person name="Joardar V."/>
            <person name="Lindeberg M."/>
            <person name="Selengut J."/>
            <person name="Paulsen I.T."/>
            <person name="Gwinn M.L."/>
            <person name="Dodson R.J."/>
            <person name="DeBoy R.T."/>
            <person name="Durkin A.S."/>
            <person name="Kolonay J.F."/>
            <person name="Madupu R."/>
            <person name="Daugherty S.C."/>
            <person name="Brinkac L.M."/>
            <person name="Beanan M.J."/>
            <person name="Haft D.H."/>
            <person name="Nelson W.C."/>
            <person name="Davidsen T.M."/>
            <person name="Zafar N."/>
            <person name="Zhou L."/>
            <person name="Liu J."/>
            <person name="Yuan Q."/>
            <person name="Khouri H.M."/>
            <person name="Fedorova N.B."/>
            <person name="Tran B."/>
            <person name="Russell D."/>
            <person name="Berry K.J."/>
            <person name="Utterback T.R."/>
            <person name="Van Aken S.E."/>
            <person name="Feldblyum T.V."/>
            <person name="D'Ascenzo M."/>
            <person name="Deng W.-L."/>
            <person name="Ramos A.R."/>
            <person name="Alfano J.R."/>
            <person name="Cartinhour S."/>
            <person name="Chatterjee A.K."/>
            <person name="Delaney T.P."/>
            <person name="Lazarowitz S.G."/>
            <person name="Martin G.B."/>
            <person name="Schneider D.J."/>
            <person name="Tang X."/>
            <person name="Bender C.L."/>
            <person name="White O."/>
            <person name="Fraser C.M."/>
            <person name="Collmer A."/>
        </authorList>
    </citation>
    <scope>NUCLEOTIDE SEQUENCE [LARGE SCALE GENOMIC DNA]</scope>
    <source>
        <strain>ATCC BAA-871 / DC3000</strain>
    </source>
</reference>
<organism>
    <name type="scientific">Pseudomonas syringae pv. tomato (strain ATCC BAA-871 / DC3000)</name>
    <dbReference type="NCBI Taxonomy" id="223283"/>
    <lineage>
        <taxon>Bacteria</taxon>
        <taxon>Pseudomonadati</taxon>
        <taxon>Pseudomonadota</taxon>
        <taxon>Gammaproteobacteria</taxon>
        <taxon>Pseudomonadales</taxon>
        <taxon>Pseudomonadaceae</taxon>
        <taxon>Pseudomonas</taxon>
    </lineage>
</organism>
<feature type="chain" id="PRO_0000101588" description="Ribosomal RNA small subunit methyltransferase A">
    <location>
        <begin position="1"/>
        <end position="268"/>
    </location>
</feature>
<feature type="binding site" evidence="1">
    <location>
        <position position="16"/>
    </location>
    <ligand>
        <name>S-adenosyl-L-methionine</name>
        <dbReference type="ChEBI" id="CHEBI:59789"/>
    </ligand>
</feature>
<feature type="binding site" evidence="1">
    <location>
        <position position="18"/>
    </location>
    <ligand>
        <name>S-adenosyl-L-methionine</name>
        <dbReference type="ChEBI" id="CHEBI:59789"/>
    </ligand>
</feature>
<feature type="binding site" evidence="1">
    <location>
        <position position="43"/>
    </location>
    <ligand>
        <name>S-adenosyl-L-methionine</name>
        <dbReference type="ChEBI" id="CHEBI:59789"/>
    </ligand>
</feature>
<feature type="binding site" evidence="1">
    <location>
        <position position="64"/>
    </location>
    <ligand>
        <name>S-adenosyl-L-methionine</name>
        <dbReference type="ChEBI" id="CHEBI:59789"/>
    </ligand>
</feature>
<feature type="binding site" evidence="1">
    <location>
        <position position="89"/>
    </location>
    <ligand>
        <name>S-adenosyl-L-methionine</name>
        <dbReference type="ChEBI" id="CHEBI:59789"/>
    </ligand>
</feature>
<feature type="binding site" evidence="1">
    <location>
        <position position="110"/>
    </location>
    <ligand>
        <name>S-adenosyl-L-methionine</name>
        <dbReference type="ChEBI" id="CHEBI:59789"/>
    </ligand>
</feature>
<protein>
    <recommendedName>
        <fullName evidence="1">Ribosomal RNA small subunit methyltransferase A</fullName>
        <ecNumber evidence="1">2.1.1.182</ecNumber>
    </recommendedName>
    <alternativeName>
        <fullName evidence="1">16S rRNA (adenine(1518)-N(6)/adenine(1519)-N(6))-dimethyltransferase</fullName>
    </alternativeName>
    <alternativeName>
        <fullName evidence="1">16S rRNA dimethyladenosine transferase</fullName>
    </alternativeName>
    <alternativeName>
        <fullName evidence="1">16S rRNA dimethylase</fullName>
    </alternativeName>
    <alternativeName>
        <fullName evidence="1">S-adenosylmethionine-6-N', N'-adenosyl(rRNA) dimethyltransferase</fullName>
    </alternativeName>
</protein>
<accession>Q88A46</accession>